<reference key="1">
    <citation type="journal article" date="2004" name="Insect Biochem. Mol. Biol.">
        <title>Expression and evolution of delta9 and delta11 desaturase genes in the moth Spodoptera littoralis.</title>
        <authorList>
            <person name="Rodriguez S."/>
            <person name="Hao G."/>
            <person name="Liu W."/>
            <person name="Pina B."/>
            <person name="Rooney A.P."/>
            <person name="Camps F."/>
            <person name="Roelofs W.L."/>
            <person name="Fabrias G."/>
        </authorList>
    </citation>
    <scope>NUCLEOTIDE SEQUENCE [MRNA]</scope>
    <scope>CATALYTIC ACTIVITY</scope>
    <scope>FUNCTION</scope>
    <scope>TISSUE SPECIFICITY</scope>
    <source>
        <tissue>Pheromone gland</tissue>
    </source>
</reference>
<organism>
    <name type="scientific">Spodoptera littoralis</name>
    <name type="common">Egyptian cotton leafworm</name>
    <dbReference type="NCBI Taxonomy" id="7109"/>
    <lineage>
        <taxon>Eukaryota</taxon>
        <taxon>Metazoa</taxon>
        <taxon>Ecdysozoa</taxon>
        <taxon>Arthropoda</taxon>
        <taxon>Hexapoda</taxon>
        <taxon>Insecta</taxon>
        <taxon>Pterygota</taxon>
        <taxon>Neoptera</taxon>
        <taxon>Endopterygota</taxon>
        <taxon>Lepidoptera</taxon>
        <taxon>Glossata</taxon>
        <taxon>Ditrysia</taxon>
        <taxon>Noctuoidea</taxon>
        <taxon>Noctuidae</taxon>
        <taxon>Amphipyrinae</taxon>
        <taxon>Spodoptera</taxon>
    </lineage>
</organism>
<name>ACO11_SPOLI</name>
<comment type="function">
    <text evidence="4">Catalyzes the formation of delta(11) fatty acyl precursors in the pheromone gland, and has high activity towards palmitic acid and stearic acid.</text>
</comment>
<comment type="catalytic activity">
    <reaction evidence="4">
        <text>an 11,12-saturated fatty acyl-CoA + 2 Fe(II)-[cytochrome b5] + O2 + 2 H(+) = an (11Z)-Delta(11)-fatty acyl-CoA + 2 Fe(III)-[cytochrome b5] + 2 H2O</text>
        <dbReference type="Rhea" id="RHEA:25852"/>
        <dbReference type="Rhea" id="RHEA-COMP:10438"/>
        <dbReference type="Rhea" id="RHEA-COMP:10439"/>
        <dbReference type="ChEBI" id="CHEBI:15377"/>
        <dbReference type="ChEBI" id="CHEBI:15378"/>
        <dbReference type="ChEBI" id="CHEBI:15379"/>
        <dbReference type="ChEBI" id="CHEBI:29033"/>
        <dbReference type="ChEBI" id="CHEBI:29034"/>
        <dbReference type="ChEBI" id="CHEBI:84947"/>
        <dbReference type="ChEBI" id="CHEBI:84948"/>
        <dbReference type="EC" id="1.14.19.5"/>
    </reaction>
</comment>
<comment type="cofactor">
    <cofactor evidence="1">
        <name>Fe cation</name>
        <dbReference type="ChEBI" id="CHEBI:24875"/>
    </cofactor>
</comment>
<comment type="subcellular location">
    <subcellularLocation>
        <location evidence="1">Membrane</location>
        <topology evidence="1">Multi-pass membrane protein</topology>
    </subcellularLocation>
</comment>
<comment type="tissue specificity">
    <text evidence="4">Detected in the pheromone gland.</text>
</comment>
<comment type="domain">
    <text evidence="1">The histidine box domains may contain the active site and/or be involved in metal ion binding.</text>
</comment>
<comment type="similarity">
    <text evidence="5">Belongs to the fatty acid desaturase type 1 family.</text>
</comment>
<dbReference type="EC" id="1.14.19.5" evidence="4"/>
<dbReference type="EMBL" id="AY362879">
    <property type="protein sequence ID" value="AAQ74259.1"/>
    <property type="molecule type" value="mRNA"/>
</dbReference>
<dbReference type="SMR" id="Q6US81"/>
<dbReference type="BRENDA" id="1.14.19.5">
    <property type="organism ID" value="5837"/>
</dbReference>
<dbReference type="GO" id="GO:0005789">
    <property type="term" value="C:endoplasmic reticulum membrane"/>
    <property type="evidence" value="ECO:0007669"/>
    <property type="project" value="TreeGrafter"/>
</dbReference>
<dbReference type="GO" id="GO:0017105">
    <property type="term" value="F:acyl-CoA 11-(Z)-desaturase activity"/>
    <property type="evidence" value="ECO:0000315"/>
    <property type="project" value="UniProtKB"/>
</dbReference>
<dbReference type="GO" id="GO:0005506">
    <property type="term" value="F:iron ion binding"/>
    <property type="evidence" value="ECO:0007669"/>
    <property type="project" value="TreeGrafter"/>
</dbReference>
<dbReference type="GO" id="GO:0004768">
    <property type="term" value="F:stearoyl-CoA 9-desaturase activity"/>
    <property type="evidence" value="ECO:0007669"/>
    <property type="project" value="TreeGrafter"/>
</dbReference>
<dbReference type="GO" id="GO:0006631">
    <property type="term" value="P:fatty acid metabolic process"/>
    <property type="evidence" value="ECO:0000314"/>
    <property type="project" value="UniProtKB"/>
</dbReference>
<dbReference type="GO" id="GO:0042811">
    <property type="term" value="P:pheromone biosynthetic process"/>
    <property type="evidence" value="ECO:0000315"/>
    <property type="project" value="UniProtKB"/>
</dbReference>
<dbReference type="GO" id="GO:0006636">
    <property type="term" value="P:unsaturated fatty acid biosynthetic process"/>
    <property type="evidence" value="ECO:0007669"/>
    <property type="project" value="TreeGrafter"/>
</dbReference>
<dbReference type="CDD" id="cd03505">
    <property type="entry name" value="Delta9-FADS-like"/>
    <property type="match status" value="1"/>
</dbReference>
<dbReference type="InterPro" id="IPR015876">
    <property type="entry name" value="Acyl-CoA_DS"/>
</dbReference>
<dbReference type="InterPro" id="IPR005804">
    <property type="entry name" value="FA_desaturase_dom"/>
</dbReference>
<dbReference type="InterPro" id="IPR001522">
    <property type="entry name" value="FADS-1_CS"/>
</dbReference>
<dbReference type="PANTHER" id="PTHR11351">
    <property type="entry name" value="ACYL-COA DESATURASE"/>
    <property type="match status" value="1"/>
</dbReference>
<dbReference type="PANTHER" id="PTHR11351:SF31">
    <property type="entry name" value="DESATURASE 1, ISOFORM A-RELATED"/>
    <property type="match status" value="1"/>
</dbReference>
<dbReference type="Pfam" id="PF00487">
    <property type="entry name" value="FA_desaturase"/>
    <property type="match status" value="1"/>
</dbReference>
<dbReference type="PRINTS" id="PR00075">
    <property type="entry name" value="FACDDSATRASE"/>
</dbReference>
<dbReference type="PROSITE" id="PS00476">
    <property type="entry name" value="FATTY_ACID_DESATUR_1"/>
    <property type="match status" value="1"/>
</dbReference>
<protein>
    <recommendedName>
        <fullName>Acyl-CoA Delta(11) desaturase</fullName>
        <ecNumber evidence="4">1.14.19.5</ecNumber>
    </recommendedName>
    <alternativeName>
        <fullName>Acyl-CoA Delta-11 desaturase</fullName>
        <shortName>Delta(11)-desaturase</shortName>
    </alternativeName>
    <alternativeName>
        <fullName>SlsZ/E11</fullName>
    </alternativeName>
</protein>
<proteinExistence type="evidence at protein level"/>
<keyword id="KW-0275">Fatty acid biosynthesis</keyword>
<keyword id="KW-0276">Fatty acid metabolism</keyword>
<keyword id="KW-0408">Iron</keyword>
<keyword id="KW-0444">Lipid biosynthesis</keyword>
<keyword id="KW-0443">Lipid metabolism</keyword>
<keyword id="KW-0472">Membrane</keyword>
<keyword id="KW-0479">Metal-binding</keyword>
<keyword id="KW-0560">Oxidoreductase</keyword>
<keyword id="KW-0812">Transmembrane</keyword>
<keyword id="KW-1133">Transmembrane helix</keyword>
<accession>Q6US81</accession>
<feature type="chain" id="PRO_0000418991" description="Acyl-CoA Delta(11) desaturase">
    <location>
        <begin position="1"/>
        <end position="338"/>
    </location>
</feature>
<feature type="transmembrane region" description="Helical" evidence="2">
    <location>
        <begin position="33"/>
        <end position="53"/>
    </location>
</feature>
<feature type="transmembrane region" description="Helical" evidence="2">
    <location>
        <begin position="61"/>
        <end position="81"/>
    </location>
</feature>
<feature type="transmembrane region" description="Helical" evidence="2">
    <location>
        <begin position="97"/>
        <end position="117"/>
    </location>
</feature>
<feature type="transmembrane region" description="Helical" evidence="2">
    <location>
        <begin position="181"/>
        <end position="201"/>
    </location>
</feature>
<feature type="transmembrane region" description="Helical" evidence="2">
    <location>
        <begin position="212"/>
        <end position="234"/>
    </location>
</feature>
<feature type="region of interest" description="Disordered" evidence="3">
    <location>
        <begin position="318"/>
        <end position="338"/>
    </location>
</feature>
<feature type="short sequence motif" description="Histidine box-1">
    <location>
        <begin position="83"/>
        <end position="88"/>
    </location>
</feature>
<feature type="short sequence motif" description="Histidine box-2">
    <location>
        <begin position="120"/>
        <end position="124"/>
    </location>
</feature>
<feature type="short sequence motif" description="Histidine box-3">
    <location>
        <begin position="260"/>
        <end position="264"/>
    </location>
</feature>
<evidence type="ECO:0000250" key="1"/>
<evidence type="ECO:0000255" key="2"/>
<evidence type="ECO:0000256" key="3">
    <source>
        <dbReference type="SAM" id="MobiDB-lite"/>
    </source>
</evidence>
<evidence type="ECO:0000269" key="4">
    <source>
    </source>
</evidence>
<evidence type="ECO:0000305" key="5"/>
<sequence>MAQCVQTTTILEQKEEKTVTLLVPQAGKRKFEIVYFNIITFAYWHIAGLYGLYLCFTSTKWATVLFSFFLFVVAEVGVTAGSHRLWSHKTYKAKLPLQILLMVMNSLAFQNTVIDWVRDHRLHHKYSDTDADPHNASRGFFYSHVGWLLVRKHPDVKKRGKEIDISDIYNNPVLRFQKKYAIPFIGAVCFVLPTLIPVYGWGETWTNAWHVAMLRYIMNLNVTFLVNSAAHIYGKRPYDKKILPSQNIAVSIATFGEGFHNYHHVFPWDYRAAELGNNSLNFPTKFIDFFAWIGWAYDLKTVSKEMIKQRSKRTGDGTNLWGLEDVDTPEDLKNTKGE</sequence>